<reference key="1">
    <citation type="journal article" date="2006" name="Proc. Natl. Acad. Sci. U.S.A.">
        <title>Multireplicon genome architecture of Lactobacillus salivarius.</title>
        <authorList>
            <person name="Claesson M.J."/>
            <person name="Li Y."/>
            <person name="Leahy S."/>
            <person name="Canchaya C."/>
            <person name="van Pijkeren J.P."/>
            <person name="Cerdeno-Tarraga A.M."/>
            <person name="Parkhill J."/>
            <person name="Flynn S."/>
            <person name="O'Sullivan G.C."/>
            <person name="Collins J.K."/>
            <person name="Higgins D."/>
            <person name="Shanahan F."/>
            <person name="Fitzgerald G.F."/>
            <person name="van Sinderen D."/>
            <person name="O'Toole P.W."/>
        </authorList>
    </citation>
    <scope>NUCLEOTIDE SEQUENCE [LARGE SCALE GENOMIC DNA]</scope>
    <source>
        <strain>UCC118</strain>
    </source>
</reference>
<proteinExistence type="inferred from homology"/>
<organism>
    <name type="scientific">Ligilactobacillus salivarius (strain UCC118)</name>
    <name type="common">Lactobacillus salivarius</name>
    <dbReference type="NCBI Taxonomy" id="362948"/>
    <lineage>
        <taxon>Bacteria</taxon>
        <taxon>Bacillati</taxon>
        <taxon>Bacillota</taxon>
        <taxon>Bacilli</taxon>
        <taxon>Lactobacillales</taxon>
        <taxon>Lactobacillaceae</taxon>
        <taxon>Ligilactobacillus</taxon>
    </lineage>
</organism>
<protein>
    <recommendedName>
        <fullName evidence="1">Probable potassium transport system protein Kup</fullName>
    </recommendedName>
</protein>
<gene>
    <name evidence="1" type="primary">kup</name>
    <name type="ordered locus">LSL_1284</name>
</gene>
<sequence length="674" mass="76257">MKVKRKIFWGALITLGIVYGDIGTSPLYVMKALIMDAGGLNGLTEDYIIGCLSLVFWTLMLMTTIKYVLIALRADNHGEGGIFALYALVRNKKKWLILPALLGGAALLADGTLTPAVTVTSAIEGLKGISIGSQPWINTQLEVNLVTFVILLVLFLIQRFGTSFIGKAFGPLMLLWFSFLAIFGIVNLIHEPLVLRALSPHYGLMLLFSPANKVGIFILGSVFLATTGAEALYSDMGHVGKRSIYLTWPFVCGALVLNYFGQGAYLIKNLGNFKTTGDIFNPFYEMLPSSVYLFGVLISTIAAIIASQALITGSFTLVEEAVGLKLLPKMKVEHPSLSRGQIYIRTINWSLCICTLLVLVYFRTSERMEAAYGLAITITMLMTTILLSQYLKDKVNVVFNGIFLAVFLSVELIFLISSLTKFTHGGYVTLLITLLILLIMVIWYFGNKLRDYLSDEEEWVSLRDYKDVLQELSNDDRIPLYISNLVMLTKVDKRTYKVKRETLYSILDKSPKKAKVYWFVTVNTTSDPYTNYYTVDMMGTRNIVNLQLYLGFKMDHRVNLYLRQVVEDLIENDIIDEQPQKYTTMPGRKIGDFRFIIIQELLSPNTRVRGWQHLLISARIFIQNHSTNPIQWFGLEFSEVKVEKVPLLLKKRRIPAMEQRMILNPKDVKRSTKE</sequence>
<feature type="chain" id="PRO_0000279795" description="Probable potassium transport system protein Kup">
    <location>
        <begin position="1"/>
        <end position="674"/>
    </location>
</feature>
<feature type="transmembrane region" description="Helical" evidence="1">
    <location>
        <begin position="7"/>
        <end position="27"/>
    </location>
</feature>
<feature type="transmembrane region" description="Helical" evidence="1">
    <location>
        <begin position="52"/>
        <end position="72"/>
    </location>
</feature>
<feature type="transmembrane region" description="Helical" evidence="1">
    <location>
        <begin position="95"/>
        <end position="115"/>
    </location>
</feature>
<feature type="transmembrane region" description="Helical" evidence="1">
    <location>
        <begin position="145"/>
        <end position="165"/>
    </location>
</feature>
<feature type="transmembrane region" description="Helical" evidence="1">
    <location>
        <begin position="169"/>
        <end position="189"/>
    </location>
</feature>
<feature type="transmembrane region" description="Helical" evidence="1">
    <location>
        <begin position="204"/>
        <end position="224"/>
    </location>
</feature>
<feature type="transmembrane region" description="Helical" evidence="1">
    <location>
        <begin position="244"/>
        <end position="264"/>
    </location>
</feature>
<feature type="transmembrane region" description="Helical" evidence="1">
    <location>
        <begin position="291"/>
        <end position="311"/>
    </location>
</feature>
<feature type="transmembrane region" description="Helical" evidence="1">
    <location>
        <begin position="342"/>
        <end position="362"/>
    </location>
</feature>
<feature type="transmembrane region" description="Helical" evidence="1">
    <location>
        <begin position="368"/>
        <end position="388"/>
    </location>
</feature>
<feature type="transmembrane region" description="Helical" evidence="1">
    <location>
        <begin position="397"/>
        <end position="417"/>
    </location>
</feature>
<feature type="transmembrane region" description="Helical" evidence="1">
    <location>
        <begin position="425"/>
        <end position="445"/>
    </location>
</feature>
<dbReference type="EMBL" id="CP000233">
    <property type="protein sequence ID" value="ABE00091.1"/>
    <property type="molecule type" value="Genomic_DNA"/>
</dbReference>
<dbReference type="RefSeq" id="WP_011476252.1">
    <property type="nucleotide sequence ID" value="NC_007929.1"/>
</dbReference>
<dbReference type="RefSeq" id="YP_536174.1">
    <property type="nucleotide sequence ID" value="NC_007929.1"/>
</dbReference>
<dbReference type="STRING" id="362948.LSL_1284"/>
<dbReference type="KEGG" id="lsl:LSL_1284"/>
<dbReference type="PATRIC" id="fig|362948.14.peg.1358"/>
<dbReference type="HOGENOM" id="CLU_008142_4_1_9"/>
<dbReference type="OrthoDB" id="9805577at2"/>
<dbReference type="Proteomes" id="UP000006559">
    <property type="component" value="Chromosome"/>
</dbReference>
<dbReference type="GO" id="GO:0005886">
    <property type="term" value="C:plasma membrane"/>
    <property type="evidence" value="ECO:0007669"/>
    <property type="project" value="UniProtKB-SubCell"/>
</dbReference>
<dbReference type="GO" id="GO:0015079">
    <property type="term" value="F:potassium ion transmembrane transporter activity"/>
    <property type="evidence" value="ECO:0007669"/>
    <property type="project" value="UniProtKB-UniRule"/>
</dbReference>
<dbReference type="GO" id="GO:0015293">
    <property type="term" value="F:symporter activity"/>
    <property type="evidence" value="ECO:0007669"/>
    <property type="project" value="UniProtKB-UniRule"/>
</dbReference>
<dbReference type="HAMAP" id="MF_01522">
    <property type="entry name" value="Kup"/>
    <property type="match status" value="1"/>
</dbReference>
<dbReference type="InterPro" id="IPR003855">
    <property type="entry name" value="K+_transporter"/>
</dbReference>
<dbReference type="InterPro" id="IPR053952">
    <property type="entry name" value="K_trans_C"/>
</dbReference>
<dbReference type="InterPro" id="IPR053951">
    <property type="entry name" value="K_trans_N"/>
</dbReference>
<dbReference type="InterPro" id="IPR023051">
    <property type="entry name" value="Kup"/>
</dbReference>
<dbReference type="PANTHER" id="PTHR30540:SF83">
    <property type="entry name" value="K+ POTASSIUM TRANSPORTER"/>
    <property type="match status" value="1"/>
</dbReference>
<dbReference type="PANTHER" id="PTHR30540">
    <property type="entry name" value="OSMOTIC STRESS POTASSIUM TRANSPORTER"/>
    <property type="match status" value="1"/>
</dbReference>
<dbReference type="Pfam" id="PF02705">
    <property type="entry name" value="K_trans"/>
    <property type="match status" value="1"/>
</dbReference>
<dbReference type="Pfam" id="PF22776">
    <property type="entry name" value="K_trans_C"/>
    <property type="match status" value="1"/>
</dbReference>
<comment type="function">
    <text evidence="1">Transport of potassium into the cell. Likely operates as a K(+):H(+) symporter.</text>
</comment>
<comment type="catalytic activity">
    <reaction evidence="1">
        <text>K(+)(in) + H(+)(in) = K(+)(out) + H(+)(out)</text>
        <dbReference type="Rhea" id="RHEA:28490"/>
        <dbReference type="ChEBI" id="CHEBI:15378"/>
        <dbReference type="ChEBI" id="CHEBI:29103"/>
    </reaction>
    <physiologicalReaction direction="right-to-left" evidence="1">
        <dbReference type="Rhea" id="RHEA:28492"/>
    </physiologicalReaction>
</comment>
<comment type="subcellular location">
    <subcellularLocation>
        <location evidence="1">Cell membrane</location>
        <topology evidence="1">Multi-pass membrane protein</topology>
    </subcellularLocation>
</comment>
<comment type="similarity">
    <text evidence="1">Belongs to the HAK/KUP transporter (TC 2.A.72) family.</text>
</comment>
<evidence type="ECO:0000255" key="1">
    <source>
        <dbReference type="HAMAP-Rule" id="MF_01522"/>
    </source>
</evidence>
<accession>Q1WSN8</accession>
<name>KUP_LIGS1</name>
<keyword id="KW-1003">Cell membrane</keyword>
<keyword id="KW-0406">Ion transport</keyword>
<keyword id="KW-0472">Membrane</keyword>
<keyword id="KW-0630">Potassium</keyword>
<keyword id="KW-0633">Potassium transport</keyword>
<keyword id="KW-1185">Reference proteome</keyword>
<keyword id="KW-0769">Symport</keyword>
<keyword id="KW-0812">Transmembrane</keyword>
<keyword id="KW-1133">Transmembrane helix</keyword>
<keyword id="KW-0813">Transport</keyword>